<organism>
    <name type="scientific">Saccharomyces cerevisiae (strain ATCC 204508 / S288c)</name>
    <name type="common">Baker's yeast</name>
    <dbReference type="NCBI Taxonomy" id="559292"/>
    <lineage>
        <taxon>Eukaryota</taxon>
        <taxon>Fungi</taxon>
        <taxon>Dikarya</taxon>
        <taxon>Ascomycota</taxon>
        <taxon>Saccharomycotina</taxon>
        <taxon>Saccharomycetes</taxon>
        <taxon>Saccharomycetales</taxon>
        <taxon>Saccharomycetaceae</taxon>
        <taxon>Saccharomyces</taxon>
    </lineage>
</organism>
<gene>
    <name evidence="8 10" type="primary">PEX13</name>
    <name type="synonym">PAS20</name>
    <name type="ordered locus">YLR191W</name>
    <name type="ORF">L9470.1</name>
</gene>
<feature type="chain" id="PRO_0000058324" description="Peroxisomal membrane protein PEX13">
    <location>
        <begin position="1"/>
        <end position="386"/>
    </location>
</feature>
<feature type="topological domain" description="Lumenal" evidence="1">
    <location>
        <begin position="1"/>
        <end position="263"/>
    </location>
</feature>
<feature type="transmembrane region" description="Helical" evidence="1">
    <location>
        <begin position="264"/>
        <end position="280"/>
    </location>
</feature>
<feature type="topological domain" description="Cytoplasmic" evidence="1">
    <location>
        <begin position="281"/>
        <end position="386"/>
    </location>
</feature>
<feature type="domain" description="SH3" evidence="2">
    <location>
        <begin position="306"/>
        <end position="372"/>
    </location>
</feature>
<feature type="region of interest" description="Disordered" evidence="3">
    <location>
        <begin position="1"/>
        <end position="76"/>
    </location>
</feature>
<feature type="compositionally biased region" description="Polar residues" evidence="3">
    <location>
        <begin position="23"/>
        <end position="39"/>
    </location>
</feature>
<feature type="compositionally biased region" description="Low complexity" evidence="3">
    <location>
        <begin position="44"/>
        <end position="55"/>
    </location>
</feature>
<feature type="compositionally biased region" description="Polar residues" evidence="3">
    <location>
        <begin position="65"/>
        <end position="76"/>
    </location>
</feature>
<feature type="helix" evidence="13">
    <location>
        <begin position="305"/>
        <end position="307"/>
    </location>
</feature>
<feature type="strand" evidence="13">
    <location>
        <begin position="309"/>
        <end position="315"/>
    </location>
</feature>
<feature type="turn" evidence="13">
    <location>
        <begin position="322"/>
        <end position="324"/>
    </location>
</feature>
<feature type="strand" evidence="13">
    <location>
        <begin position="333"/>
        <end position="340"/>
    </location>
</feature>
<feature type="strand" evidence="13">
    <location>
        <begin position="346"/>
        <end position="353"/>
    </location>
</feature>
<feature type="turn" evidence="12">
    <location>
        <begin position="355"/>
        <end position="357"/>
    </location>
</feature>
<feature type="strand" evidence="13">
    <location>
        <begin position="359"/>
        <end position="363"/>
    </location>
</feature>
<feature type="helix" evidence="13">
    <location>
        <begin position="364"/>
        <end position="366"/>
    </location>
</feature>
<feature type="strand" evidence="13">
    <location>
        <begin position="367"/>
        <end position="369"/>
    </location>
</feature>
<name>PEX13_YEAST</name>
<dbReference type="EMBL" id="S82971">
    <property type="protein sequence ID" value="AAB46885.1"/>
    <property type="molecule type" value="Genomic_DNA"/>
</dbReference>
<dbReference type="EMBL" id="U37420">
    <property type="protein sequence ID" value="AAA79308.1"/>
    <property type="molecule type" value="Genomic_DNA"/>
</dbReference>
<dbReference type="EMBL" id="U17246">
    <property type="protein sequence ID" value="AAB67453.1"/>
    <property type="molecule type" value="Genomic_DNA"/>
</dbReference>
<dbReference type="EMBL" id="U14913">
    <property type="protein sequence ID" value="AAB67448.1"/>
    <property type="molecule type" value="Genomic_DNA"/>
</dbReference>
<dbReference type="EMBL" id="BK006945">
    <property type="protein sequence ID" value="DAA09510.1"/>
    <property type="molecule type" value="Genomic_DNA"/>
</dbReference>
<dbReference type="PIR" id="S51436">
    <property type="entry name" value="S51436"/>
</dbReference>
<dbReference type="RefSeq" id="NP_013292.1">
    <property type="nucleotide sequence ID" value="NM_001182078.1"/>
</dbReference>
<dbReference type="PDB" id="1JQQ">
    <property type="method" value="X-ray"/>
    <property type="resolution" value="2.65 A"/>
    <property type="chains" value="A/B/C/D=299-386"/>
</dbReference>
<dbReference type="PDB" id="1N5Z">
    <property type="method" value="X-ray"/>
    <property type="resolution" value="2.70 A"/>
    <property type="chains" value="A/B=299-386"/>
</dbReference>
<dbReference type="PDB" id="1NM7">
    <property type="method" value="NMR"/>
    <property type="chains" value="A=310-370"/>
</dbReference>
<dbReference type="PDB" id="2V1R">
    <property type="method" value="X-ray"/>
    <property type="resolution" value="2.10 A"/>
    <property type="chains" value="A/B=299-374"/>
</dbReference>
<dbReference type="PDBsum" id="1JQQ"/>
<dbReference type="PDBsum" id="1N5Z"/>
<dbReference type="PDBsum" id="1NM7"/>
<dbReference type="PDBsum" id="2V1R"/>
<dbReference type="SMR" id="P80667"/>
<dbReference type="BioGRID" id="31461">
    <property type="interactions" value="281"/>
</dbReference>
<dbReference type="ComplexPortal" id="CPX-1904">
    <property type="entry name" value="Peroxisomal PEX13-PEX14-PEX17 docking complex"/>
</dbReference>
<dbReference type="DIP" id="DIP-2473N"/>
<dbReference type="ELM" id="P80667"/>
<dbReference type="FunCoup" id="P80667">
    <property type="interactions" value="234"/>
</dbReference>
<dbReference type="IntAct" id="P80667">
    <property type="interactions" value="80"/>
</dbReference>
<dbReference type="MINT" id="P80667"/>
<dbReference type="STRING" id="4932.YLR191W"/>
<dbReference type="TCDB" id="3.A.20.1.5">
    <property type="family name" value="the peroxisomal protein importer (ppi) family"/>
</dbReference>
<dbReference type="iPTMnet" id="P80667"/>
<dbReference type="PaxDb" id="4932-YLR191W"/>
<dbReference type="PeptideAtlas" id="P80667"/>
<dbReference type="EnsemblFungi" id="YLR191W_mRNA">
    <property type="protein sequence ID" value="YLR191W"/>
    <property type="gene ID" value="YLR191W"/>
</dbReference>
<dbReference type="GeneID" id="850888"/>
<dbReference type="KEGG" id="sce:YLR191W"/>
<dbReference type="AGR" id="SGD:S000004181"/>
<dbReference type="SGD" id="S000004181">
    <property type="gene designation" value="PEX13"/>
</dbReference>
<dbReference type="VEuPathDB" id="FungiDB:YLR191W"/>
<dbReference type="eggNOG" id="KOG3875">
    <property type="taxonomic scope" value="Eukaryota"/>
</dbReference>
<dbReference type="GeneTree" id="ENSGT00390000016883"/>
<dbReference type="HOGENOM" id="CLU_034386_2_0_1"/>
<dbReference type="InParanoid" id="P80667"/>
<dbReference type="OMA" id="EGWFPKK"/>
<dbReference type="OrthoDB" id="10037838at2759"/>
<dbReference type="BioCyc" id="YEAST:G3O-32313-MONOMER"/>
<dbReference type="Reactome" id="R-SCE-8866654">
    <property type="pathway name" value="E3 ubiquitin ligases ubiquitinate target proteins"/>
</dbReference>
<dbReference type="Reactome" id="R-SCE-9033241">
    <property type="pathway name" value="Peroxisomal protein import"/>
</dbReference>
<dbReference type="Reactome" id="R-SCE-9603798">
    <property type="pathway name" value="Class I peroxisomal membrane protein import"/>
</dbReference>
<dbReference type="BioGRID-ORCS" id="850888">
    <property type="hits" value="0 hits in 10 CRISPR screens"/>
</dbReference>
<dbReference type="EvolutionaryTrace" id="P80667"/>
<dbReference type="PRO" id="PR:P80667"/>
<dbReference type="Proteomes" id="UP000002311">
    <property type="component" value="Chromosome XII"/>
</dbReference>
<dbReference type="RNAct" id="P80667">
    <property type="molecule type" value="protein"/>
</dbReference>
<dbReference type="GO" id="GO:1990429">
    <property type="term" value="C:peroxisomal importomer complex"/>
    <property type="evidence" value="ECO:0000314"/>
    <property type="project" value="SGD"/>
</dbReference>
<dbReference type="GO" id="GO:0005778">
    <property type="term" value="C:peroxisomal membrane"/>
    <property type="evidence" value="ECO:0000314"/>
    <property type="project" value="ComplexPortal"/>
</dbReference>
<dbReference type="GO" id="GO:1902495">
    <property type="term" value="C:transmembrane transporter complex"/>
    <property type="evidence" value="ECO:0000314"/>
    <property type="project" value="UniProt"/>
</dbReference>
<dbReference type="GO" id="GO:0008320">
    <property type="term" value="F:protein transmembrane transporter activity"/>
    <property type="evidence" value="ECO:0000314"/>
    <property type="project" value="UniProtKB"/>
</dbReference>
<dbReference type="GO" id="GO:0030674">
    <property type="term" value="F:protein-macromolecule adaptor activity"/>
    <property type="evidence" value="ECO:0000353"/>
    <property type="project" value="SGD"/>
</dbReference>
<dbReference type="GO" id="GO:0016560">
    <property type="term" value="P:protein import into peroxisome matrix, docking"/>
    <property type="evidence" value="ECO:0000314"/>
    <property type="project" value="UniProtKB"/>
</dbReference>
<dbReference type="CDD" id="cd11771">
    <property type="entry name" value="SH3_Pex13p_fungal"/>
    <property type="match status" value="1"/>
</dbReference>
<dbReference type="FunFam" id="2.30.30.40:FF:000128">
    <property type="entry name" value="Peroxisomal membrane protein (Pex13)"/>
    <property type="match status" value="1"/>
</dbReference>
<dbReference type="Gene3D" id="2.30.30.40">
    <property type="entry name" value="SH3 Domains"/>
    <property type="match status" value="1"/>
</dbReference>
<dbReference type="InterPro" id="IPR007223">
    <property type="entry name" value="Peroxin-13_N"/>
</dbReference>
<dbReference type="InterPro" id="IPR035463">
    <property type="entry name" value="Pex13"/>
</dbReference>
<dbReference type="InterPro" id="IPR036028">
    <property type="entry name" value="SH3-like_dom_sf"/>
</dbReference>
<dbReference type="InterPro" id="IPR001452">
    <property type="entry name" value="SH3_domain"/>
</dbReference>
<dbReference type="PANTHER" id="PTHR19332">
    <property type="entry name" value="PEROXISOMAL MEMBRANE PROTEIN PEX13"/>
    <property type="match status" value="1"/>
</dbReference>
<dbReference type="PANTHER" id="PTHR19332:SF1">
    <property type="entry name" value="PEROXISOMAL MEMBRANE PROTEIN PEX13"/>
    <property type="match status" value="1"/>
</dbReference>
<dbReference type="Pfam" id="PF04088">
    <property type="entry name" value="Peroxin-13_N"/>
    <property type="match status" value="1"/>
</dbReference>
<dbReference type="Pfam" id="PF00018">
    <property type="entry name" value="SH3_1"/>
    <property type="match status" value="1"/>
</dbReference>
<dbReference type="PRINTS" id="PR00452">
    <property type="entry name" value="SH3DOMAIN"/>
</dbReference>
<dbReference type="SMART" id="SM00326">
    <property type="entry name" value="SH3"/>
    <property type="match status" value="1"/>
</dbReference>
<dbReference type="SUPFAM" id="SSF50044">
    <property type="entry name" value="SH3-domain"/>
    <property type="match status" value="1"/>
</dbReference>
<dbReference type="PROSITE" id="PS50002">
    <property type="entry name" value="SH3"/>
    <property type="match status" value="1"/>
</dbReference>
<sequence>MSSTAVPRPKPWETSASLEEPQRNAQSLSAMMTSNQQDSRPTEESNNSNSASESAPEVLPRPAALNSSGTYGESNTIPGIYGNSNYGIPYDNNPYSMNSIYGNSIGRYGYGGSYYGNNYGSFYGGGYGAGAGYGMNNGSGLGESTKATFQLIESLIGAVTGFAQMLESTYMATHNSFFTMISVAEQFGNLKEMLGSFFGIFAIMKFLKKILYRATKGRLGIPPKNFAESEGSKNKLIEDFQKFNDSGTINSNEKATRRKISWKPLLFFLMAVFGFPYLLNKFITKLQTSGTIRASQGNGSEPIDPSKLEFARALYDFVPENPEMEVALKKGDLMAILSKKDPLGRDSDWWKVRTKNGNIGYIPYNYIEIIKRRKKIEHVDDETRTH</sequence>
<protein>
    <recommendedName>
        <fullName evidence="9">Peroxisomal membrane protein PEX13</fullName>
    </recommendedName>
    <alternativeName>
        <fullName evidence="9">Peroxin-13</fullName>
    </alternativeName>
</protein>
<reference key="1">
    <citation type="journal article" date="1996" name="J. Cell Biol.">
        <title>The SH3 domain of the Saccharomyces cerevisiae peroxisomal membrane protein Pex13p functions as a docking site for Pex5p, a mobile receptor for the import PTS1-containing proteins.</title>
        <authorList>
            <person name="Elgersma Y."/>
            <person name="Kwast L."/>
            <person name="Klein A."/>
            <person name="Voorn-Brouwer T."/>
            <person name="van den Berg M."/>
            <person name="Tabak H.F."/>
            <person name="Distel B."/>
        </authorList>
    </citation>
    <scope>NUCLEOTIDE SEQUENCE [GENOMIC DNA]</scope>
</reference>
<reference key="2">
    <citation type="journal article" date="1997" name="Nature">
        <title>The nucleotide sequence of Saccharomyces cerevisiae chromosome XII.</title>
        <authorList>
            <person name="Johnston M."/>
            <person name="Hillier L.W."/>
            <person name="Riles L."/>
            <person name="Albermann K."/>
            <person name="Andre B."/>
            <person name="Ansorge W."/>
            <person name="Benes V."/>
            <person name="Brueckner M."/>
            <person name="Delius H."/>
            <person name="Dubois E."/>
            <person name="Duesterhoeft A."/>
            <person name="Entian K.-D."/>
            <person name="Floeth M."/>
            <person name="Goffeau A."/>
            <person name="Hebling U."/>
            <person name="Heumann K."/>
            <person name="Heuss-Neitzel D."/>
            <person name="Hilbert H."/>
            <person name="Hilger F."/>
            <person name="Kleine K."/>
            <person name="Koetter P."/>
            <person name="Louis E.J."/>
            <person name="Messenguy F."/>
            <person name="Mewes H.-W."/>
            <person name="Miosga T."/>
            <person name="Moestl D."/>
            <person name="Mueller-Auer S."/>
            <person name="Nentwich U."/>
            <person name="Obermaier B."/>
            <person name="Piravandi E."/>
            <person name="Pohl T.M."/>
            <person name="Portetelle D."/>
            <person name="Purnelle B."/>
            <person name="Rechmann S."/>
            <person name="Rieger M."/>
            <person name="Rinke M."/>
            <person name="Rose M."/>
            <person name="Scharfe M."/>
            <person name="Scherens B."/>
            <person name="Scholler P."/>
            <person name="Schwager C."/>
            <person name="Schwarz S."/>
            <person name="Underwood A.P."/>
            <person name="Urrestarazu L.A."/>
            <person name="Vandenbol M."/>
            <person name="Verhasselt P."/>
            <person name="Vierendeels F."/>
            <person name="Voet M."/>
            <person name="Volckaert G."/>
            <person name="Voss H."/>
            <person name="Wambutt R."/>
            <person name="Wedler E."/>
            <person name="Wedler H."/>
            <person name="Zimmermann F.K."/>
            <person name="Zollner A."/>
            <person name="Hani J."/>
            <person name="Hoheisel J.D."/>
        </authorList>
    </citation>
    <scope>NUCLEOTIDE SEQUENCE [LARGE SCALE GENOMIC DNA]</scope>
    <source>
        <strain>ATCC 204508 / S288c</strain>
    </source>
</reference>
<reference key="3">
    <citation type="journal article" date="2014" name="G3 (Bethesda)">
        <title>The reference genome sequence of Saccharomyces cerevisiae: Then and now.</title>
        <authorList>
            <person name="Engel S.R."/>
            <person name="Dietrich F.S."/>
            <person name="Fisk D.G."/>
            <person name="Binkley G."/>
            <person name="Balakrishnan R."/>
            <person name="Costanzo M.C."/>
            <person name="Dwight S.S."/>
            <person name="Hitz B.C."/>
            <person name="Karra K."/>
            <person name="Nash R.S."/>
            <person name="Weng S."/>
            <person name="Wong E.D."/>
            <person name="Lloyd P."/>
            <person name="Skrzypek M.S."/>
            <person name="Miyasato S.R."/>
            <person name="Simison M."/>
            <person name="Cherry J.M."/>
        </authorList>
    </citation>
    <scope>GENOME REANNOTATION</scope>
    <source>
        <strain>ATCC 204508 / S288c</strain>
    </source>
</reference>
<reference key="4">
    <citation type="journal article" date="1996" name="J. Cell Biol.">
        <title>Identification of Pex13p a peroxisomal membrane receptor for the PTS1 recognition factor.</title>
        <authorList>
            <person name="Erdmann R."/>
            <person name="Blobel G."/>
        </authorList>
    </citation>
    <scope>PARTIAL PROTEIN SEQUENCE</scope>
    <scope>FUNCTION</scope>
    <scope>SUBCELLULAR LOCATION</scope>
    <source>
        <strain>ATCC 204508 / S288c</strain>
    </source>
</reference>
<reference key="5">
    <citation type="journal article" date="2003" name="Nature">
        <title>Global analysis of protein expression in yeast.</title>
        <authorList>
            <person name="Ghaemmaghami S."/>
            <person name="Huh W.-K."/>
            <person name="Bower K."/>
            <person name="Howson R.W."/>
            <person name="Belle A."/>
            <person name="Dephoure N."/>
            <person name="O'Shea E.K."/>
            <person name="Weissman J.S."/>
        </authorList>
    </citation>
    <scope>LEVEL OF PROTEIN EXPRESSION [LARGE SCALE ANALYSIS]</scope>
</reference>
<reference key="6">
    <citation type="journal article" date="2010" name="Nat. Cell Biol.">
        <title>The peroxisomal importomer constitutes a large and highly dynamic pore.</title>
        <authorList>
            <person name="Meinecke M."/>
            <person name="Cizmowski C."/>
            <person name="Schliebs W."/>
            <person name="Krueger V."/>
            <person name="Beck S."/>
            <person name="Wagner R."/>
            <person name="Erdmann R."/>
        </authorList>
    </citation>
    <scope>FUNCTION</scope>
    <scope>INTERACTION WITH PEX13</scope>
</reference>
<reference evidence="11" key="7">
    <citation type="journal article" date="2002" name="Mol. Cell">
        <title>Topography for independent binding of alpha-helical and PPII-helical ligands to a peroxisomal SH3 domain.</title>
        <authorList>
            <person name="Douangamath A."/>
            <person name="Filipp F.V."/>
            <person name="Klein A.T."/>
            <person name="Barnett P."/>
            <person name="Zou P."/>
            <person name="Voorn-Brouwer T."/>
            <person name="Vega M.C."/>
            <person name="Mayans O.M."/>
            <person name="Sattler M."/>
            <person name="Distel B."/>
            <person name="Wilmanns M."/>
        </authorList>
    </citation>
    <scope>X-RAY CRYSTALLOGRAPHY (2.70 ANGSTROMS) OF 299-386 IN COMPLEX WITH PEX14 SH3 DOMAIN</scope>
</reference>
<comment type="function">
    <text evidence="6 7">Component of the PEX13-PEX14 docking complex, a translocon channel that specifically mediates the import of peroxisomal cargo proteins bound to PEX5 or PEX21 receptors (PubMed:20154681, PubMed:8858167). The PEX13-PEX14 docking complex forms a large import pore which can be opened to a diameter of about 9 nm (PubMed:20154681). Mechanistically, PEX5 (or PEX21) receptor along with cargo proteins associates with the PEX14 subunit of the PEX13-PEX14 docking complex in the cytosol, leading to the insertion of the receptor into the organelle membrane with the concomitant translocation of the cargo into the peroxisome matrix (PubMed:20154681).</text>
</comment>
<comment type="subunit">
    <text evidence="4 6">Interacts (via SH3 domain) with PEX14 (via SH3-binding motif); forming the PEX13-PEX14 docking complex.</text>
</comment>
<comment type="interaction">
    <interactant intactId="EBI-13206">
        <id>P80667</id>
    </interactant>
    <interactant intactId="EBI-28798">
        <id>P53933</id>
        <label>APP1</label>
    </interactant>
    <organismsDiffer>false</organismsDiffer>
    <experiments>2</experiments>
</comment>
<comment type="interaction">
    <interactant intactId="EBI-13206">
        <id>P80667</id>
    </interactant>
    <interactant intactId="EBI-28955">
        <id>P53901</id>
        <label>INN1</label>
    </interactant>
    <organismsDiffer>false</organismsDiffer>
    <experiments>2</experiments>
</comment>
<comment type="interaction">
    <interactant intactId="EBI-13206">
        <id>P80667</id>
    </interactant>
    <interactant intactId="EBI-10022">
        <id>Q12446</id>
        <label>LAS17</label>
    </interactant>
    <organismsDiffer>false</organismsDiffer>
    <experiments>2</experiments>
</comment>
<comment type="interaction">
    <interactant intactId="EBI-13206">
        <id>P80667</id>
    </interactant>
    <interactant intactId="EBI-13194">
        <id>Q05568</id>
        <label>PEX10</label>
    </interactant>
    <organismsDiffer>false</organismsDiffer>
    <experiments>8</experiments>
</comment>
<comment type="interaction">
    <interactant intactId="EBI-13206">
        <id>P80667</id>
    </interactant>
    <interactant intactId="EBI-2077297">
        <id>Q04370</id>
        <label>PEX12</label>
    </interactant>
    <organismsDiffer>false</organismsDiffer>
    <experiments>7</experiments>
</comment>
<comment type="interaction">
    <interactant intactId="EBI-13206">
        <id>P80667</id>
    </interactant>
    <interactant intactId="EBI-13212">
        <id>P53112</id>
        <label>PEX14</label>
    </interactant>
    <organismsDiffer>false</organismsDiffer>
    <experiments>18</experiments>
</comment>
<comment type="interaction">
    <interactant intactId="EBI-13206">
        <id>P80667</id>
    </interactant>
    <interactant intactId="EBI-13160">
        <id>P32800</id>
        <label>PEX2</label>
    </interactant>
    <organismsDiffer>false</organismsDiffer>
    <experiments>10</experiments>
</comment>
<comment type="interaction">
    <interactant intactId="EBI-13206">
        <id>P80667</id>
    </interactant>
    <interactant intactId="EBI-13170">
        <id>P35056</id>
        <label>PEX5</label>
    </interactant>
    <organismsDiffer>false</organismsDiffer>
    <experiments>6</experiments>
</comment>
<comment type="interaction">
    <interactant intactId="EBI-13206">
        <id>P80667</id>
    </interactant>
    <interactant intactId="EBI-9703">
        <id>P40494</id>
        <label>PRK1</label>
    </interactant>
    <organismsDiffer>false</organismsDiffer>
    <experiments>2</experiments>
</comment>
<comment type="interaction">
    <interactant intactId="EBI-13206">
        <id>P80667</id>
    </interactant>
    <interactant intactId="EBI-18285">
        <id>Q03497</id>
        <label>STE20</label>
    </interactant>
    <organismsDiffer>false</organismsDiffer>
    <experiments>3</experiments>
</comment>
<comment type="interaction">
    <interactant intactId="EBI-13206">
        <id>P80667</id>
    </interactant>
    <interactant intactId="EBI-411625">
        <id>P25604</id>
        <label>STP22</label>
    </interactant>
    <organismsDiffer>false</organismsDiffer>
    <experiments>2</experiments>
</comment>
<comment type="interaction">
    <interactant intactId="EBI-13206">
        <id>P80667</id>
    </interactant>
    <interactant intactId="EBI-19857">
        <id>P40453</id>
        <label>UBP7</label>
    </interactant>
    <organismsDiffer>false</organismsDiffer>
    <experiments>2</experiments>
</comment>
<comment type="subcellular location">
    <subcellularLocation>
        <location evidence="7">Peroxisome membrane</location>
        <topology evidence="9">Single-pass membrane protein</topology>
    </subcellularLocation>
</comment>
<comment type="miscellaneous">
    <text evidence="5">Present with 7900 molecules/cell in log phase SD medium.</text>
</comment>
<comment type="similarity">
    <text evidence="9">Belongs to the peroxin-13 family.</text>
</comment>
<accession>P80667</accession>
<accession>D6VYJ4</accession>
<proteinExistence type="evidence at protein level"/>
<evidence type="ECO:0000255" key="1"/>
<evidence type="ECO:0000255" key="2">
    <source>
        <dbReference type="PROSITE-ProRule" id="PRU00192"/>
    </source>
</evidence>
<evidence type="ECO:0000256" key="3">
    <source>
        <dbReference type="SAM" id="MobiDB-lite"/>
    </source>
</evidence>
<evidence type="ECO:0000269" key="4">
    <source>
    </source>
</evidence>
<evidence type="ECO:0000269" key="5">
    <source>
    </source>
</evidence>
<evidence type="ECO:0000269" key="6">
    <source>
    </source>
</evidence>
<evidence type="ECO:0000269" key="7">
    <source>
    </source>
</evidence>
<evidence type="ECO:0000303" key="8">
    <source>
    </source>
</evidence>
<evidence type="ECO:0000305" key="9"/>
<evidence type="ECO:0000312" key="10">
    <source>
        <dbReference type="SGD" id="S000004181"/>
    </source>
</evidence>
<evidence type="ECO:0007744" key="11">
    <source>
        <dbReference type="PDB" id="1N5Z"/>
    </source>
</evidence>
<evidence type="ECO:0007829" key="12">
    <source>
        <dbReference type="PDB" id="1NM7"/>
    </source>
</evidence>
<evidence type="ECO:0007829" key="13">
    <source>
        <dbReference type="PDB" id="2V1R"/>
    </source>
</evidence>
<keyword id="KW-0002">3D-structure</keyword>
<keyword id="KW-0903">Direct protein sequencing</keyword>
<keyword id="KW-0472">Membrane</keyword>
<keyword id="KW-0576">Peroxisome</keyword>
<keyword id="KW-0653">Protein transport</keyword>
<keyword id="KW-1185">Reference proteome</keyword>
<keyword id="KW-0728">SH3 domain</keyword>
<keyword id="KW-0811">Translocation</keyword>
<keyword id="KW-0812">Transmembrane</keyword>
<keyword id="KW-1133">Transmembrane helix</keyword>
<keyword id="KW-0813">Transport</keyword>